<proteinExistence type="inferred from homology"/>
<protein>
    <recommendedName>
        <fullName evidence="1">Glycine dehydrogenase (decarboxylating)</fullName>
        <ecNumber evidence="1">1.4.4.2</ecNumber>
    </recommendedName>
    <alternativeName>
        <fullName evidence="1">Glycine cleavage system P-protein</fullName>
    </alternativeName>
    <alternativeName>
        <fullName evidence="1">Glycine decarboxylase</fullName>
    </alternativeName>
    <alternativeName>
        <fullName evidence="1">Glycine dehydrogenase (aminomethyl-transferring)</fullName>
    </alternativeName>
</protein>
<dbReference type="EC" id="1.4.4.2" evidence="1"/>
<dbReference type="EMBL" id="BX251410">
    <property type="protein sequence ID" value="CAD66824.1"/>
    <property type="molecule type" value="Genomic_DNA"/>
</dbReference>
<dbReference type="RefSeq" id="WP_011096105.1">
    <property type="nucleotide sequence ID" value="NC_004551.1"/>
</dbReference>
<dbReference type="SMR" id="Q83IA7"/>
<dbReference type="GeneID" id="67387916"/>
<dbReference type="KEGG" id="tws:TW144"/>
<dbReference type="HOGENOM" id="CLU_004620_2_1_11"/>
<dbReference type="GO" id="GO:0005829">
    <property type="term" value="C:cytosol"/>
    <property type="evidence" value="ECO:0007669"/>
    <property type="project" value="TreeGrafter"/>
</dbReference>
<dbReference type="GO" id="GO:0005960">
    <property type="term" value="C:glycine cleavage complex"/>
    <property type="evidence" value="ECO:0007669"/>
    <property type="project" value="TreeGrafter"/>
</dbReference>
<dbReference type="GO" id="GO:0016594">
    <property type="term" value="F:glycine binding"/>
    <property type="evidence" value="ECO:0007669"/>
    <property type="project" value="TreeGrafter"/>
</dbReference>
<dbReference type="GO" id="GO:0004375">
    <property type="term" value="F:glycine dehydrogenase (decarboxylating) activity"/>
    <property type="evidence" value="ECO:0007669"/>
    <property type="project" value="UniProtKB-EC"/>
</dbReference>
<dbReference type="GO" id="GO:0030170">
    <property type="term" value="F:pyridoxal phosphate binding"/>
    <property type="evidence" value="ECO:0007669"/>
    <property type="project" value="TreeGrafter"/>
</dbReference>
<dbReference type="GO" id="GO:0019464">
    <property type="term" value="P:glycine decarboxylation via glycine cleavage system"/>
    <property type="evidence" value="ECO:0007669"/>
    <property type="project" value="UniProtKB-UniRule"/>
</dbReference>
<dbReference type="FunFam" id="3.40.640.10:FF:000199">
    <property type="entry name" value="Glycine dehydrogenase [decarboxylating], mitochondrial"/>
    <property type="match status" value="1"/>
</dbReference>
<dbReference type="FunFam" id="3.40.640.10:FF:000224">
    <property type="entry name" value="Probable glycine dehydrogenase (decarboxylating) subunit 2"/>
    <property type="match status" value="1"/>
</dbReference>
<dbReference type="Gene3D" id="3.90.1150.10">
    <property type="entry name" value="Aspartate Aminotransferase, domain 1"/>
    <property type="match status" value="2"/>
</dbReference>
<dbReference type="Gene3D" id="3.40.640.10">
    <property type="entry name" value="Type I PLP-dependent aspartate aminotransferase-like (Major domain)"/>
    <property type="match status" value="2"/>
</dbReference>
<dbReference type="HAMAP" id="MF_00711">
    <property type="entry name" value="GcvP"/>
    <property type="match status" value="1"/>
</dbReference>
<dbReference type="InterPro" id="IPR000192">
    <property type="entry name" value="Aminotrans_V_dom"/>
</dbReference>
<dbReference type="InterPro" id="IPR003437">
    <property type="entry name" value="GcvP"/>
</dbReference>
<dbReference type="InterPro" id="IPR049316">
    <property type="entry name" value="GDC-P_C"/>
</dbReference>
<dbReference type="InterPro" id="IPR049315">
    <property type="entry name" value="GDC-P_N"/>
</dbReference>
<dbReference type="InterPro" id="IPR020581">
    <property type="entry name" value="GDC_P"/>
</dbReference>
<dbReference type="InterPro" id="IPR015424">
    <property type="entry name" value="PyrdxlP-dep_Trfase"/>
</dbReference>
<dbReference type="InterPro" id="IPR015421">
    <property type="entry name" value="PyrdxlP-dep_Trfase_major"/>
</dbReference>
<dbReference type="InterPro" id="IPR015422">
    <property type="entry name" value="PyrdxlP-dep_Trfase_small"/>
</dbReference>
<dbReference type="NCBIfam" id="TIGR00461">
    <property type="entry name" value="gcvP"/>
    <property type="match status" value="1"/>
</dbReference>
<dbReference type="PANTHER" id="PTHR11773:SF1">
    <property type="entry name" value="GLYCINE DEHYDROGENASE (DECARBOXYLATING), MITOCHONDRIAL"/>
    <property type="match status" value="1"/>
</dbReference>
<dbReference type="PANTHER" id="PTHR11773">
    <property type="entry name" value="GLYCINE DEHYDROGENASE, DECARBOXYLATING"/>
    <property type="match status" value="1"/>
</dbReference>
<dbReference type="Pfam" id="PF00266">
    <property type="entry name" value="Aminotran_5"/>
    <property type="match status" value="1"/>
</dbReference>
<dbReference type="Pfam" id="PF21478">
    <property type="entry name" value="GcvP2_C"/>
    <property type="match status" value="1"/>
</dbReference>
<dbReference type="Pfam" id="PF02347">
    <property type="entry name" value="GDC-P"/>
    <property type="match status" value="1"/>
</dbReference>
<dbReference type="SUPFAM" id="SSF53383">
    <property type="entry name" value="PLP-dependent transferases"/>
    <property type="match status" value="2"/>
</dbReference>
<organism>
    <name type="scientific">Tropheryma whipplei (strain TW08/27)</name>
    <name type="common">Whipple's bacillus</name>
    <dbReference type="NCBI Taxonomy" id="218496"/>
    <lineage>
        <taxon>Bacteria</taxon>
        <taxon>Bacillati</taxon>
        <taxon>Actinomycetota</taxon>
        <taxon>Actinomycetes</taxon>
        <taxon>Micrococcales</taxon>
        <taxon>Tropherymataceae</taxon>
        <taxon>Tropheryma</taxon>
    </lineage>
</organism>
<feature type="chain" id="PRO_0000166943" description="Glycine dehydrogenase (decarboxylating)">
    <location>
        <begin position="1"/>
        <end position="968"/>
    </location>
</feature>
<feature type="modified residue" description="N6-(pyridoxal phosphate)lysine" evidence="1">
    <location>
        <position position="717"/>
    </location>
</feature>
<accession>Q83IA7</accession>
<name>GCSP_TROW8</name>
<keyword id="KW-0560">Oxidoreductase</keyword>
<keyword id="KW-0663">Pyridoxal phosphate</keyword>
<evidence type="ECO:0000255" key="1">
    <source>
        <dbReference type="HAMAP-Rule" id="MF_00711"/>
    </source>
</evidence>
<sequence>MHERHIGPSQEEIDHMLGFLGYKSLDDLMHAALPNGVQSPPDIKIPSHDELTCLTQLAAFAKMNRIKTSMLGQGFYNCITPAVIRRNILENPSWYTSYTPYQPEISQGRLEMLINFQTMICDLTGLEIANASMLDEASCAAEAMLLAKRVSRSSSNKYLVHNGVFPHIRRVLETRADAVGVEIVDLPEGQSIDFDHFGVYAQYQSASGKLLDLRPLFSRSKRAGAICVIGCDLLMLTLFTSPGELGADIAFGSAQRFGIPMNFGGPLASFLAARKAMERSLPGRLVGVSVDADSNHAYRLTLQTREQHIRREKATSNICTATVLMAIAAVAFAQHHGPKGLRAIAHRINTVAVGFARLLKQTAFRVSSLDIFDTIEINNPTQVCVEAESKYDLLFWKVDDNKLRITFDEVTARLDGDLPERLSKVFGISPDKIRDLGCNYDSCDCSFYGDLQQAREGLSSVASRNISVHSDLARHPLRRFSGYLKHPVFNNYTGEVALMRYLKALSDKDFALDRGMIPLGSCTMKLNAAFQLEPVLWPEFANLHPFAPLGDADGTLQIIDQIETWLANLSGYDAVSLQPTAGSQGELAGLLAIRGYYKSLNLDRDVCLIPASAHGTNAASAVLAGMRVVVVACDQQGNIDLDDLRLKASKNAHALAALMVTYPSTHGVYEDNISEVCSVVHKYGGQVYVDGANSNALIGYLRTGDFGGDVSHLNLHKTFGIPHGGGGPGIGPVVAKAHLAPFLPFRNRVHKPSTDLPAVKHMGGPIASSDYGFAGALYISWAYIFCLGSQGMKRCTAVAVLVANYIAKQLSDTFPVLYTGKNNLVAHEFIMDFREVTRVSGITVDDVCKRLIDYGFHAPTMSFPVPGTLMVEPTESEPFSEIQRFIKTIRSIRAEIDRVIDKTYDPDNNPLKRAPHTLEQIASDKWDRPYSRRTGIVYTSGKYWPASARIDNAYGDRNIFCTCPDLPD</sequence>
<reference key="1">
    <citation type="journal article" date="2003" name="Lancet">
        <title>Sequencing and analysis of the genome of the Whipple's disease bacterium Tropheryma whipplei.</title>
        <authorList>
            <person name="Bentley S.D."/>
            <person name="Maiwald M."/>
            <person name="Murphy L.D."/>
            <person name="Pallen M.J."/>
            <person name="Yeats C.A."/>
            <person name="Dover L.G."/>
            <person name="Norbertczak H.T."/>
            <person name="Besra G.S."/>
            <person name="Quail M.A."/>
            <person name="Harris D.E."/>
            <person name="von Herbay A."/>
            <person name="Goble A."/>
            <person name="Rutter S."/>
            <person name="Squares R."/>
            <person name="Squares S."/>
            <person name="Barrell B.G."/>
            <person name="Parkhill J."/>
            <person name="Relman D.A."/>
        </authorList>
    </citation>
    <scope>NUCLEOTIDE SEQUENCE [LARGE SCALE GENOMIC DNA]</scope>
    <source>
        <strain>TW08/27</strain>
    </source>
</reference>
<gene>
    <name evidence="1" type="primary">gcvP</name>
    <name type="ordered locus">TW144</name>
</gene>
<comment type="function">
    <text evidence="1">The glycine cleavage system catalyzes the degradation of glycine. The P protein binds the alpha-amino group of glycine through its pyridoxal phosphate cofactor; CO(2) is released and the remaining methylamine moiety is then transferred to the lipoamide cofactor of the H protein.</text>
</comment>
<comment type="catalytic activity">
    <reaction evidence="1">
        <text>N(6)-[(R)-lipoyl]-L-lysyl-[glycine-cleavage complex H protein] + glycine + H(+) = N(6)-[(R)-S(8)-aminomethyldihydrolipoyl]-L-lysyl-[glycine-cleavage complex H protein] + CO2</text>
        <dbReference type="Rhea" id="RHEA:24304"/>
        <dbReference type="Rhea" id="RHEA-COMP:10494"/>
        <dbReference type="Rhea" id="RHEA-COMP:10495"/>
        <dbReference type="ChEBI" id="CHEBI:15378"/>
        <dbReference type="ChEBI" id="CHEBI:16526"/>
        <dbReference type="ChEBI" id="CHEBI:57305"/>
        <dbReference type="ChEBI" id="CHEBI:83099"/>
        <dbReference type="ChEBI" id="CHEBI:83143"/>
        <dbReference type="EC" id="1.4.4.2"/>
    </reaction>
</comment>
<comment type="cofactor">
    <cofactor evidence="1">
        <name>pyridoxal 5'-phosphate</name>
        <dbReference type="ChEBI" id="CHEBI:597326"/>
    </cofactor>
</comment>
<comment type="subunit">
    <text evidence="1">The glycine cleavage system is composed of four proteins: P, T, L and H.</text>
</comment>
<comment type="similarity">
    <text evidence="1">Belongs to the GcvP family.</text>
</comment>